<accession>Q5L7Z7</accession>
<gene>
    <name evidence="1" type="primary">pnp</name>
    <name type="ordered locus">BF4129</name>
</gene>
<organism>
    <name type="scientific">Bacteroides fragilis (strain ATCC 25285 / DSM 2151 / CCUG 4856 / JCM 11019 / LMG 10263 / NCTC 9343 / Onslow / VPI 2553 / EN-2)</name>
    <dbReference type="NCBI Taxonomy" id="272559"/>
    <lineage>
        <taxon>Bacteria</taxon>
        <taxon>Pseudomonadati</taxon>
        <taxon>Bacteroidota</taxon>
        <taxon>Bacteroidia</taxon>
        <taxon>Bacteroidales</taxon>
        <taxon>Bacteroidaceae</taxon>
        <taxon>Bacteroides</taxon>
    </lineage>
</organism>
<comment type="function">
    <text evidence="1">Involved in mRNA degradation. Catalyzes the phosphorolysis of single-stranded polyribonucleotides processively in the 3'- to 5'-direction.</text>
</comment>
<comment type="catalytic activity">
    <reaction evidence="1">
        <text>RNA(n+1) + phosphate = RNA(n) + a ribonucleoside 5'-diphosphate</text>
        <dbReference type="Rhea" id="RHEA:22096"/>
        <dbReference type="Rhea" id="RHEA-COMP:14527"/>
        <dbReference type="Rhea" id="RHEA-COMP:17342"/>
        <dbReference type="ChEBI" id="CHEBI:43474"/>
        <dbReference type="ChEBI" id="CHEBI:57930"/>
        <dbReference type="ChEBI" id="CHEBI:140395"/>
        <dbReference type="EC" id="2.7.7.8"/>
    </reaction>
</comment>
<comment type="cofactor">
    <cofactor evidence="1">
        <name>Mg(2+)</name>
        <dbReference type="ChEBI" id="CHEBI:18420"/>
    </cofactor>
</comment>
<comment type="subcellular location">
    <subcellularLocation>
        <location evidence="1">Cytoplasm</location>
    </subcellularLocation>
</comment>
<comment type="similarity">
    <text evidence="1">Belongs to the polyribonucleotide nucleotidyltransferase family.</text>
</comment>
<reference key="1">
    <citation type="journal article" date="2005" name="Science">
        <title>Extensive DNA inversions in the B. fragilis genome control variable gene expression.</title>
        <authorList>
            <person name="Cerdeno-Tarraga A.-M."/>
            <person name="Patrick S."/>
            <person name="Crossman L.C."/>
            <person name="Blakely G."/>
            <person name="Abratt V."/>
            <person name="Lennard N."/>
            <person name="Poxton I."/>
            <person name="Duerden B."/>
            <person name="Harris B."/>
            <person name="Quail M.A."/>
            <person name="Barron A."/>
            <person name="Clark L."/>
            <person name="Corton C."/>
            <person name="Doggett J."/>
            <person name="Holden M.T.G."/>
            <person name="Larke N."/>
            <person name="Line A."/>
            <person name="Lord A."/>
            <person name="Norbertczak H."/>
            <person name="Ormond D."/>
            <person name="Price C."/>
            <person name="Rabbinowitsch E."/>
            <person name="Woodward J."/>
            <person name="Barrell B.G."/>
            <person name="Parkhill J."/>
        </authorList>
    </citation>
    <scope>NUCLEOTIDE SEQUENCE [LARGE SCALE GENOMIC DNA]</scope>
    <source>
        <strain>ATCC 25285 / DSM 2151 / CCUG 4856 / JCM 11019 / LMG 10263 / NCTC 9343 / Onslow / VPI 2553 / EN-2</strain>
    </source>
</reference>
<feature type="chain" id="PRO_0000329523" description="Polyribonucleotide nucleotidyltransferase">
    <location>
        <begin position="1"/>
        <end position="708"/>
    </location>
</feature>
<feature type="domain" description="KH" evidence="1">
    <location>
        <begin position="557"/>
        <end position="619"/>
    </location>
</feature>
<feature type="domain" description="S1 motif" evidence="1">
    <location>
        <begin position="629"/>
        <end position="699"/>
    </location>
</feature>
<feature type="binding site" evidence="1">
    <location>
        <position position="490"/>
    </location>
    <ligand>
        <name>Mg(2+)</name>
        <dbReference type="ChEBI" id="CHEBI:18420"/>
    </ligand>
</feature>
<feature type="binding site" evidence="1">
    <location>
        <position position="496"/>
    </location>
    <ligand>
        <name>Mg(2+)</name>
        <dbReference type="ChEBI" id="CHEBI:18420"/>
    </ligand>
</feature>
<protein>
    <recommendedName>
        <fullName evidence="1">Polyribonucleotide nucleotidyltransferase</fullName>
        <ecNumber evidence="1">2.7.7.8</ecNumber>
    </recommendedName>
    <alternativeName>
        <fullName evidence="1">Polynucleotide phosphorylase</fullName>
        <shortName evidence="1">PNPase</shortName>
    </alternativeName>
</protein>
<dbReference type="EC" id="2.7.7.8" evidence="1"/>
<dbReference type="EMBL" id="CR626927">
    <property type="protein sequence ID" value="CAH09802.1"/>
    <property type="molecule type" value="Genomic_DNA"/>
</dbReference>
<dbReference type="RefSeq" id="WP_005791373.1">
    <property type="nucleotide sequence ID" value="NZ_UFTH01000001.1"/>
</dbReference>
<dbReference type="SMR" id="Q5L7Z7"/>
<dbReference type="PaxDb" id="272559-BF9343_4021"/>
<dbReference type="DNASU" id="3287979"/>
<dbReference type="GeneID" id="60366680"/>
<dbReference type="KEGG" id="bfs:BF9343_4021"/>
<dbReference type="eggNOG" id="COG1185">
    <property type="taxonomic scope" value="Bacteria"/>
</dbReference>
<dbReference type="HOGENOM" id="CLU_004217_2_2_10"/>
<dbReference type="Proteomes" id="UP000006731">
    <property type="component" value="Chromosome"/>
</dbReference>
<dbReference type="GO" id="GO:0005829">
    <property type="term" value="C:cytosol"/>
    <property type="evidence" value="ECO:0007669"/>
    <property type="project" value="TreeGrafter"/>
</dbReference>
<dbReference type="GO" id="GO:0000175">
    <property type="term" value="F:3'-5'-RNA exonuclease activity"/>
    <property type="evidence" value="ECO:0007669"/>
    <property type="project" value="TreeGrafter"/>
</dbReference>
<dbReference type="GO" id="GO:0000287">
    <property type="term" value="F:magnesium ion binding"/>
    <property type="evidence" value="ECO:0007669"/>
    <property type="project" value="UniProtKB-UniRule"/>
</dbReference>
<dbReference type="GO" id="GO:0004654">
    <property type="term" value="F:polyribonucleotide nucleotidyltransferase activity"/>
    <property type="evidence" value="ECO:0007669"/>
    <property type="project" value="UniProtKB-UniRule"/>
</dbReference>
<dbReference type="GO" id="GO:0003723">
    <property type="term" value="F:RNA binding"/>
    <property type="evidence" value="ECO:0007669"/>
    <property type="project" value="UniProtKB-UniRule"/>
</dbReference>
<dbReference type="GO" id="GO:0006402">
    <property type="term" value="P:mRNA catabolic process"/>
    <property type="evidence" value="ECO:0007669"/>
    <property type="project" value="UniProtKB-UniRule"/>
</dbReference>
<dbReference type="GO" id="GO:0006396">
    <property type="term" value="P:RNA processing"/>
    <property type="evidence" value="ECO:0007669"/>
    <property type="project" value="InterPro"/>
</dbReference>
<dbReference type="CDD" id="cd02393">
    <property type="entry name" value="KH-I_PNPase"/>
    <property type="match status" value="1"/>
</dbReference>
<dbReference type="CDD" id="cd11363">
    <property type="entry name" value="RNase_PH_PNPase_1"/>
    <property type="match status" value="1"/>
</dbReference>
<dbReference type="CDD" id="cd11364">
    <property type="entry name" value="RNase_PH_PNPase_2"/>
    <property type="match status" value="1"/>
</dbReference>
<dbReference type="CDD" id="cd04472">
    <property type="entry name" value="S1_PNPase"/>
    <property type="match status" value="1"/>
</dbReference>
<dbReference type="FunFam" id="2.40.50.140:FF:000178">
    <property type="entry name" value="Polyribonucleotide nucleotidyltransferase"/>
    <property type="match status" value="1"/>
</dbReference>
<dbReference type="FunFam" id="3.30.1370.10:FF:000001">
    <property type="entry name" value="Polyribonucleotide nucleotidyltransferase"/>
    <property type="match status" value="1"/>
</dbReference>
<dbReference type="FunFam" id="3.30.230.70:FF:000001">
    <property type="entry name" value="Polyribonucleotide nucleotidyltransferase"/>
    <property type="match status" value="1"/>
</dbReference>
<dbReference type="FunFam" id="3.30.230.70:FF:000014">
    <property type="entry name" value="Polyribonucleotide nucleotidyltransferase"/>
    <property type="match status" value="1"/>
</dbReference>
<dbReference type="Gene3D" id="3.30.230.70">
    <property type="entry name" value="GHMP Kinase, N-terminal domain"/>
    <property type="match status" value="2"/>
</dbReference>
<dbReference type="Gene3D" id="3.30.1370.10">
    <property type="entry name" value="K Homology domain, type 1"/>
    <property type="match status" value="1"/>
</dbReference>
<dbReference type="Gene3D" id="2.40.50.140">
    <property type="entry name" value="Nucleic acid-binding proteins"/>
    <property type="match status" value="1"/>
</dbReference>
<dbReference type="HAMAP" id="MF_01595">
    <property type="entry name" value="PNPase"/>
    <property type="match status" value="1"/>
</dbReference>
<dbReference type="InterPro" id="IPR001247">
    <property type="entry name" value="ExoRNase_PH_dom1"/>
</dbReference>
<dbReference type="InterPro" id="IPR015847">
    <property type="entry name" value="ExoRNase_PH_dom2"/>
</dbReference>
<dbReference type="InterPro" id="IPR036345">
    <property type="entry name" value="ExoRNase_PH_dom2_sf"/>
</dbReference>
<dbReference type="InterPro" id="IPR004087">
    <property type="entry name" value="KH_dom"/>
</dbReference>
<dbReference type="InterPro" id="IPR004088">
    <property type="entry name" value="KH_dom_type_1"/>
</dbReference>
<dbReference type="InterPro" id="IPR036612">
    <property type="entry name" value="KH_dom_type_1_sf"/>
</dbReference>
<dbReference type="InterPro" id="IPR012340">
    <property type="entry name" value="NA-bd_OB-fold"/>
</dbReference>
<dbReference type="InterPro" id="IPR012162">
    <property type="entry name" value="PNPase"/>
</dbReference>
<dbReference type="InterPro" id="IPR027408">
    <property type="entry name" value="PNPase/RNase_PH_dom_sf"/>
</dbReference>
<dbReference type="InterPro" id="IPR015848">
    <property type="entry name" value="PNPase_PH_RNA-bd_bac/org-type"/>
</dbReference>
<dbReference type="InterPro" id="IPR036456">
    <property type="entry name" value="PNPase_PH_RNA-bd_sf"/>
</dbReference>
<dbReference type="InterPro" id="IPR020568">
    <property type="entry name" value="Ribosomal_Su5_D2-typ_SF"/>
</dbReference>
<dbReference type="InterPro" id="IPR003029">
    <property type="entry name" value="S1_domain"/>
</dbReference>
<dbReference type="NCBIfam" id="TIGR03591">
    <property type="entry name" value="polynuc_phos"/>
    <property type="match status" value="1"/>
</dbReference>
<dbReference type="NCBIfam" id="NF008805">
    <property type="entry name" value="PRK11824.1"/>
    <property type="match status" value="1"/>
</dbReference>
<dbReference type="PANTHER" id="PTHR11252">
    <property type="entry name" value="POLYRIBONUCLEOTIDE NUCLEOTIDYLTRANSFERASE"/>
    <property type="match status" value="1"/>
</dbReference>
<dbReference type="PANTHER" id="PTHR11252:SF0">
    <property type="entry name" value="POLYRIBONUCLEOTIDE NUCLEOTIDYLTRANSFERASE 1, MITOCHONDRIAL"/>
    <property type="match status" value="1"/>
</dbReference>
<dbReference type="Pfam" id="PF00013">
    <property type="entry name" value="KH_1"/>
    <property type="match status" value="1"/>
</dbReference>
<dbReference type="Pfam" id="PF03726">
    <property type="entry name" value="PNPase"/>
    <property type="match status" value="1"/>
</dbReference>
<dbReference type="Pfam" id="PF01138">
    <property type="entry name" value="RNase_PH"/>
    <property type="match status" value="2"/>
</dbReference>
<dbReference type="Pfam" id="PF03725">
    <property type="entry name" value="RNase_PH_C"/>
    <property type="match status" value="2"/>
</dbReference>
<dbReference type="Pfam" id="PF00575">
    <property type="entry name" value="S1"/>
    <property type="match status" value="1"/>
</dbReference>
<dbReference type="PIRSF" id="PIRSF005499">
    <property type="entry name" value="PNPase"/>
    <property type="match status" value="1"/>
</dbReference>
<dbReference type="SMART" id="SM00322">
    <property type="entry name" value="KH"/>
    <property type="match status" value="1"/>
</dbReference>
<dbReference type="SMART" id="SM00316">
    <property type="entry name" value="S1"/>
    <property type="match status" value="1"/>
</dbReference>
<dbReference type="SUPFAM" id="SSF54791">
    <property type="entry name" value="Eukaryotic type KH-domain (KH-domain type I)"/>
    <property type="match status" value="1"/>
</dbReference>
<dbReference type="SUPFAM" id="SSF50249">
    <property type="entry name" value="Nucleic acid-binding proteins"/>
    <property type="match status" value="1"/>
</dbReference>
<dbReference type="SUPFAM" id="SSF46915">
    <property type="entry name" value="Polynucleotide phosphorylase/guanosine pentaphosphate synthase (PNPase/GPSI), domain 3"/>
    <property type="match status" value="1"/>
</dbReference>
<dbReference type="SUPFAM" id="SSF55666">
    <property type="entry name" value="Ribonuclease PH domain 2-like"/>
    <property type="match status" value="2"/>
</dbReference>
<dbReference type="SUPFAM" id="SSF54211">
    <property type="entry name" value="Ribosomal protein S5 domain 2-like"/>
    <property type="match status" value="2"/>
</dbReference>
<dbReference type="PROSITE" id="PS50084">
    <property type="entry name" value="KH_TYPE_1"/>
    <property type="match status" value="1"/>
</dbReference>
<dbReference type="PROSITE" id="PS50126">
    <property type="entry name" value="S1"/>
    <property type="match status" value="1"/>
</dbReference>
<proteinExistence type="inferred from homology"/>
<name>PNP_BACFN</name>
<sequence length="708" mass="78309">MINPIVKTIELGDGRTITLETGKLAKQADGSVMLRMGNTMLLATVCAAKDAVPGTDFMPLQVEYKEKFAAFGRFPGGFTKREGRASDYEILTCRLVDRALRPLFPDNYHAEVYVNIILFSADGVDMPDALAGLAASAALAVSDIPFNGPISEVRVARIDGKFVINPTFDQLEQADMDIMVAATYENIMMVEGEMSEVSEAELLEAMKVAHEAIKVHCKAQMELTEMVGKTVKREYCHEENDEELRKAVHDACYDKSYAIAASGNRNKHERQDAFDAIRDEFKAQFSEEELEEKGALIDRYYHDVEKEAMRRCILDEGKRLDGRKTTEIRPIWCEVGYLPGPHGSAIFTRGETQSLTSVTLGTKLDEKIIDDVLAHGKERFLLHYNFPPFSTGEAKAQRGVGRREIGHGNLAHRALKRMIPEDYPYVVRVVSDILESNGSSSMATVCAGTLALMDAGVKIKKPVSGIAMGLIKNAGEEKYAVLSDILGDEDHLGDMDFKVTGTKDGITATQMDIKVDGLSYEILERALNQAKEGRMHILGKIEETISEPRTELKDHAPRIETMTIPKEFIGAVIGPGGKIIQGMQEETGATITIEEIDNVGRIEISGTNKKSIDDAIRLIKGIVAVPEVGEVYKGKVRSIMPYGAFVEFLPGKDGLLHISEIDWKRLETVEEAGIKEGDEIEVKLIDIDPKTGKFKLSRKVLLPRPEKK</sequence>
<keyword id="KW-0963">Cytoplasm</keyword>
<keyword id="KW-0460">Magnesium</keyword>
<keyword id="KW-0479">Metal-binding</keyword>
<keyword id="KW-0548">Nucleotidyltransferase</keyword>
<keyword id="KW-0694">RNA-binding</keyword>
<keyword id="KW-0808">Transferase</keyword>
<evidence type="ECO:0000255" key="1">
    <source>
        <dbReference type="HAMAP-Rule" id="MF_01595"/>
    </source>
</evidence>